<feature type="chain" id="PRO_0000260896" description="Large ribosomal subunit protein uL6">
    <location>
        <begin position="1"/>
        <end position="179"/>
    </location>
</feature>
<protein>
    <recommendedName>
        <fullName evidence="1">Large ribosomal subunit protein uL6</fullName>
    </recommendedName>
    <alternativeName>
        <fullName evidence="2">50S ribosomal protein L6</fullName>
    </alternativeName>
</protein>
<name>RL6_MYCPA</name>
<gene>
    <name evidence="1" type="primary">rplF</name>
    <name type="ordered locus">MAP_4182</name>
</gene>
<keyword id="KW-1185">Reference proteome</keyword>
<keyword id="KW-0687">Ribonucleoprotein</keyword>
<keyword id="KW-0689">Ribosomal protein</keyword>
<keyword id="KW-0694">RNA-binding</keyword>
<keyword id="KW-0699">rRNA-binding</keyword>
<sequence length="179" mass="19454">MSRIGKQPVPVPAGVDVTIDGQKVSVKGPKGTLDLTVAEPITVSRNDDGAIVVTRPNDERRNRSLHGLSRTLVSNLVTGVTQGYTTKMEIFGVGYRVQLKGSNLEFALGYSHPVVIEAPEGITFAVQSPTKFSISGIDKQKVGQISANIRRLRRPDPYKGKGVRYEGEQIRRKVGKTGK</sequence>
<comment type="function">
    <text evidence="1">This protein binds to the 23S rRNA, and is important in its secondary structure. It is located near the subunit interface in the base of the L7/L12 stalk, and near the tRNA binding site of the peptidyltransferase center.</text>
</comment>
<comment type="subunit">
    <text evidence="1">Part of the 50S ribosomal subunit.</text>
</comment>
<comment type="similarity">
    <text evidence="1">Belongs to the universal ribosomal protein uL6 family.</text>
</comment>
<dbReference type="EMBL" id="AE016958">
    <property type="protein sequence ID" value="AAS06732.1"/>
    <property type="molecule type" value="Genomic_DNA"/>
</dbReference>
<dbReference type="RefSeq" id="WP_003873497.1">
    <property type="nucleotide sequence ID" value="NZ_CP106873.1"/>
</dbReference>
<dbReference type="SMR" id="Q73S94"/>
<dbReference type="STRING" id="262316.MAP_4182"/>
<dbReference type="GeneID" id="75271964"/>
<dbReference type="KEGG" id="mpa:MAP_4182"/>
<dbReference type="eggNOG" id="COG0097">
    <property type="taxonomic scope" value="Bacteria"/>
</dbReference>
<dbReference type="HOGENOM" id="CLU_065464_1_2_11"/>
<dbReference type="Proteomes" id="UP000000580">
    <property type="component" value="Chromosome"/>
</dbReference>
<dbReference type="GO" id="GO:0022625">
    <property type="term" value="C:cytosolic large ribosomal subunit"/>
    <property type="evidence" value="ECO:0007669"/>
    <property type="project" value="TreeGrafter"/>
</dbReference>
<dbReference type="GO" id="GO:0019843">
    <property type="term" value="F:rRNA binding"/>
    <property type="evidence" value="ECO:0007669"/>
    <property type="project" value="UniProtKB-UniRule"/>
</dbReference>
<dbReference type="GO" id="GO:0003735">
    <property type="term" value="F:structural constituent of ribosome"/>
    <property type="evidence" value="ECO:0007669"/>
    <property type="project" value="InterPro"/>
</dbReference>
<dbReference type="GO" id="GO:0002181">
    <property type="term" value="P:cytoplasmic translation"/>
    <property type="evidence" value="ECO:0007669"/>
    <property type="project" value="TreeGrafter"/>
</dbReference>
<dbReference type="FunFam" id="3.90.930.12:FF:000001">
    <property type="entry name" value="50S ribosomal protein L6"/>
    <property type="match status" value="1"/>
</dbReference>
<dbReference type="FunFam" id="3.90.930.12:FF:000002">
    <property type="entry name" value="50S ribosomal protein L6"/>
    <property type="match status" value="1"/>
</dbReference>
<dbReference type="Gene3D" id="3.90.930.12">
    <property type="entry name" value="Ribosomal protein L6, alpha-beta domain"/>
    <property type="match status" value="2"/>
</dbReference>
<dbReference type="HAMAP" id="MF_01365_B">
    <property type="entry name" value="Ribosomal_uL6_B"/>
    <property type="match status" value="1"/>
</dbReference>
<dbReference type="InterPro" id="IPR000702">
    <property type="entry name" value="Ribosomal_uL6-like"/>
</dbReference>
<dbReference type="InterPro" id="IPR036789">
    <property type="entry name" value="Ribosomal_uL6-like_a/b-dom_sf"/>
</dbReference>
<dbReference type="InterPro" id="IPR020040">
    <property type="entry name" value="Ribosomal_uL6_a/b-dom"/>
</dbReference>
<dbReference type="InterPro" id="IPR019906">
    <property type="entry name" value="Ribosomal_uL6_bac-type"/>
</dbReference>
<dbReference type="InterPro" id="IPR002358">
    <property type="entry name" value="Ribosomal_uL6_CS"/>
</dbReference>
<dbReference type="NCBIfam" id="TIGR03654">
    <property type="entry name" value="L6_bact"/>
    <property type="match status" value="1"/>
</dbReference>
<dbReference type="PANTHER" id="PTHR11655">
    <property type="entry name" value="60S/50S RIBOSOMAL PROTEIN L6/L9"/>
    <property type="match status" value="1"/>
</dbReference>
<dbReference type="PANTHER" id="PTHR11655:SF14">
    <property type="entry name" value="LARGE RIBOSOMAL SUBUNIT PROTEIN UL6M"/>
    <property type="match status" value="1"/>
</dbReference>
<dbReference type="Pfam" id="PF00347">
    <property type="entry name" value="Ribosomal_L6"/>
    <property type="match status" value="2"/>
</dbReference>
<dbReference type="PIRSF" id="PIRSF002162">
    <property type="entry name" value="Ribosomal_L6"/>
    <property type="match status" value="1"/>
</dbReference>
<dbReference type="PRINTS" id="PR00059">
    <property type="entry name" value="RIBOSOMALL6"/>
</dbReference>
<dbReference type="SUPFAM" id="SSF56053">
    <property type="entry name" value="Ribosomal protein L6"/>
    <property type="match status" value="2"/>
</dbReference>
<dbReference type="PROSITE" id="PS00525">
    <property type="entry name" value="RIBOSOMAL_L6_1"/>
    <property type="match status" value="1"/>
</dbReference>
<proteinExistence type="inferred from homology"/>
<evidence type="ECO:0000255" key="1">
    <source>
        <dbReference type="HAMAP-Rule" id="MF_01365"/>
    </source>
</evidence>
<evidence type="ECO:0000305" key="2"/>
<accession>Q73S94</accession>
<reference key="1">
    <citation type="journal article" date="2005" name="Proc. Natl. Acad. Sci. U.S.A.">
        <title>The complete genome sequence of Mycobacterium avium subspecies paratuberculosis.</title>
        <authorList>
            <person name="Li L."/>
            <person name="Bannantine J.P."/>
            <person name="Zhang Q."/>
            <person name="Amonsin A."/>
            <person name="May B.J."/>
            <person name="Alt D."/>
            <person name="Banerji N."/>
            <person name="Kanjilal S."/>
            <person name="Kapur V."/>
        </authorList>
    </citation>
    <scope>NUCLEOTIDE SEQUENCE [LARGE SCALE GENOMIC DNA]</scope>
    <source>
        <strain>ATCC BAA-968 / K-10</strain>
    </source>
</reference>
<organism>
    <name type="scientific">Mycolicibacterium paratuberculosis (strain ATCC BAA-968 / K-10)</name>
    <name type="common">Mycobacterium paratuberculosis</name>
    <dbReference type="NCBI Taxonomy" id="262316"/>
    <lineage>
        <taxon>Bacteria</taxon>
        <taxon>Bacillati</taxon>
        <taxon>Actinomycetota</taxon>
        <taxon>Actinomycetes</taxon>
        <taxon>Mycobacteriales</taxon>
        <taxon>Mycobacteriaceae</taxon>
        <taxon>Mycobacterium</taxon>
        <taxon>Mycobacterium avium complex (MAC)</taxon>
    </lineage>
</organism>